<keyword id="KW-1185">Reference proteome</keyword>
<feature type="chain" id="PRO_1000212515" description="UPF0251 protein Hore_18270">
    <location>
        <begin position="1"/>
        <end position="135"/>
    </location>
</feature>
<reference key="1">
    <citation type="journal article" date="2009" name="PLoS ONE">
        <title>Genome analysis of the anaerobic thermohalophilic bacterium Halothermothrix orenii.</title>
        <authorList>
            <person name="Mavromatis K."/>
            <person name="Ivanova N."/>
            <person name="Anderson I."/>
            <person name="Lykidis A."/>
            <person name="Hooper S.D."/>
            <person name="Sun H."/>
            <person name="Kunin V."/>
            <person name="Lapidus A."/>
            <person name="Hugenholtz P."/>
            <person name="Patel B."/>
            <person name="Kyrpides N.C."/>
        </authorList>
    </citation>
    <scope>NUCLEOTIDE SEQUENCE [LARGE SCALE GENOMIC DNA]</scope>
    <source>
        <strain>H 168 / OCM 544 / DSM 9562</strain>
    </source>
</reference>
<name>Y1827_HALOH</name>
<comment type="similarity">
    <text evidence="1">Belongs to the UPF0251 family.</text>
</comment>
<organism>
    <name type="scientific">Halothermothrix orenii (strain H 168 / OCM 544 / DSM 9562)</name>
    <dbReference type="NCBI Taxonomy" id="373903"/>
    <lineage>
        <taxon>Bacteria</taxon>
        <taxon>Bacillati</taxon>
        <taxon>Bacillota</taxon>
        <taxon>Clostridia</taxon>
        <taxon>Halanaerobiales</taxon>
        <taxon>Halothermotrichaceae</taxon>
        <taxon>Halothermothrix</taxon>
    </lineage>
</organism>
<proteinExistence type="inferred from homology"/>
<dbReference type="EMBL" id="CP001098">
    <property type="protein sequence ID" value="ACL70576.1"/>
    <property type="molecule type" value="Genomic_DNA"/>
</dbReference>
<dbReference type="RefSeq" id="WP_015923546.1">
    <property type="nucleotide sequence ID" value="NC_011899.1"/>
</dbReference>
<dbReference type="STRING" id="373903.Hore_18270"/>
<dbReference type="KEGG" id="hor:Hore_18270"/>
<dbReference type="eggNOG" id="COG1342">
    <property type="taxonomic scope" value="Bacteria"/>
</dbReference>
<dbReference type="HOGENOM" id="CLU_094511_0_1_9"/>
<dbReference type="OrthoDB" id="280278at2"/>
<dbReference type="Proteomes" id="UP000000719">
    <property type="component" value="Chromosome"/>
</dbReference>
<dbReference type="Gene3D" id="1.10.10.10">
    <property type="entry name" value="Winged helix-like DNA-binding domain superfamily/Winged helix DNA-binding domain"/>
    <property type="match status" value="1"/>
</dbReference>
<dbReference type="HAMAP" id="MF_00674">
    <property type="entry name" value="UPF0251"/>
    <property type="match status" value="1"/>
</dbReference>
<dbReference type="InterPro" id="IPR013324">
    <property type="entry name" value="RNA_pol_sigma_r3/r4-like"/>
</dbReference>
<dbReference type="InterPro" id="IPR002852">
    <property type="entry name" value="UPF0251"/>
</dbReference>
<dbReference type="InterPro" id="IPR036388">
    <property type="entry name" value="WH-like_DNA-bd_sf"/>
</dbReference>
<dbReference type="PANTHER" id="PTHR37478">
    <property type="match status" value="1"/>
</dbReference>
<dbReference type="PANTHER" id="PTHR37478:SF2">
    <property type="entry name" value="UPF0251 PROTEIN TK0562"/>
    <property type="match status" value="1"/>
</dbReference>
<dbReference type="Pfam" id="PF02001">
    <property type="entry name" value="DUF134"/>
    <property type="match status" value="1"/>
</dbReference>
<dbReference type="SUPFAM" id="SSF88659">
    <property type="entry name" value="Sigma3 and sigma4 domains of RNA polymerase sigma factors"/>
    <property type="match status" value="1"/>
</dbReference>
<accession>B8CZ57</accession>
<protein>
    <recommendedName>
        <fullName evidence="1">UPF0251 protein Hore_18270</fullName>
    </recommendedName>
</protein>
<gene>
    <name type="ordered locus">Hore_18270</name>
</gene>
<evidence type="ECO:0000255" key="1">
    <source>
        <dbReference type="HAMAP-Rule" id="MF_00674"/>
    </source>
</evidence>
<sequence length="135" mass="15891">MARPPKERRVEYIPEIRYFKPAGIPARDIKEVNLSIEEVEAIRLKDLEGLTQEECARKMEVSRPTFQRVLTGAREKIARALIEGKALRFEGGDYKLAKLHVKCHRCGNKFEVPFHHRHRFSRRFCPECDDEKNEE</sequence>